<accession>Q9SGY7</accession>
<sequence length="718" mass="77549">MDKVQQQADLFGKTISPFVASQPTNVGGFTDQKIIGGSETTQPPATSPPSPPSPDTQTSPPPATAAQPPPNQPPNTTPPPTPPSSPPPSITPPPSPPQPQPPPQSTPTGDSPVVIPFPKPQLPPPSLFPPPSLVNQLPDPRPNDNNILEPINNPISLPSPPSTPFSPPSQENSGSQGSPPLSSLLPPMLPLNPNSPGNPLQPLDSPLGGESNRVPSSSSSPSPPSLSGSNNHSGGSNRHNANSNGDGGTSQQSNESNYTEKTVIGIGIAGVLVILFIAGVFFVRRKQKKGSSSPRSNQYLPPANVSVNTEGFIHYRQKPGNGNSSAQNSSPDTNSLGNPKHGRGTPDSAVIGTSKIHFTYEELSQITEGFCKSFVVGEGGFGCVYKGILFEGKPVAIKQLKSVSAEGYREFKAEVEIISRVHHRHLVSLVGYCISEQHRFLIYEFVPNNTLDYHLHGKNLPVLEWSRRVRIAIGAAKGLAYLHEDCHPKIIHRDIKSSNILLDDEFEAQVADFGLARLNDTAQSHISTRVMGTFGYLAPEYASSGKLTDRSDVFSFGVVLLELITGRKPVDTSQPLGEESLVEWARPRLIEAIEKGDISEVVDPRLENDYVESEVYKMIETAASCVRHSALKRPRMVQVVRALDTRDDLSDLTNGVKVGQSRVYDSGQYSNEIRIFRRASEDSSDLGTNTGYYPSQDYATSHEYESESRAFNTSHRNH</sequence>
<gene>
    <name type="primary">PERK11</name>
    <name type="ordered locus">At1g10620</name>
    <name type="ORF">F20B24.6</name>
</gene>
<organism>
    <name type="scientific">Arabidopsis thaliana</name>
    <name type="common">Mouse-ear cress</name>
    <dbReference type="NCBI Taxonomy" id="3702"/>
    <lineage>
        <taxon>Eukaryota</taxon>
        <taxon>Viridiplantae</taxon>
        <taxon>Streptophyta</taxon>
        <taxon>Embryophyta</taxon>
        <taxon>Tracheophyta</taxon>
        <taxon>Spermatophyta</taxon>
        <taxon>Magnoliopsida</taxon>
        <taxon>eudicotyledons</taxon>
        <taxon>Gunneridae</taxon>
        <taxon>Pentapetalae</taxon>
        <taxon>rosids</taxon>
        <taxon>malvids</taxon>
        <taxon>Brassicales</taxon>
        <taxon>Brassicaceae</taxon>
        <taxon>Camelineae</taxon>
        <taxon>Arabidopsis</taxon>
    </lineage>
</organism>
<comment type="catalytic activity">
    <reaction>
        <text>L-seryl-[protein] + ATP = O-phospho-L-seryl-[protein] + ADP + H(+)</text>
        <dbReference type="Rhea" id="RHEA:17989"/>
        <dbReference type="Rhea" id="RHEA-COMP:9863"/>
        <dbReference type="Rhea" id="RHEA-COMP:11604"/>
        <dbReference type="ChEBI" id="CHEBI:15378"/>
        <dbReference type="ChEBI" id="CHEBI:29999"/>
        <dbReference type="ChEBI" id="CHEBI:30616"/>
        <dbReference type="ChEBI" id="CHEBI:83421"/>
        <dbReference type="ChEBI" id="CHEBI:456216"/>
        <dbReference type="EC" id="2.7.11.1"/>
    </reaction>
</comment>
<comment type="catalytic activity">
    <reaction>
        <text>L-threonyl-[protein] + ATP = O-phospho-L-threonyl-[protein] + ADP + H(+)</text>
        <dbReference type="Rhea" id="RHEA:46608"/>
        <dbReference type="Rhea" id="RHEA-COMP:11060"/>
        <dbReference type="Rhea" id="RHEA-COMP:11605"/>
        <dbReference type="ChEBI" id="CHEBI:15378"/>
        <dbReference type="ChEBI" id="CHEBI:30013"/>
        <dbReference type="ChEBI" id="CHEBI:30616"/>
        <dbReference type="ChEBI" id="CHEBI:61977"/>
        <dbReference type="ChEBI" id="CHEBI:456216"/>
        <dbReference type="EC" id="2.7.11.1"/>
    </reaction>
</comment>
<comment type="subcellular location">
    <subcellularLocation>
        <location evidence="1">Cell membrane</location>
        <topology evidence="1">Single-pass membrane protein</topology>
    </subcellularLocation>
</comment>
<comment type="tissue specificity">
    <text evidence="7">Mostly expressed in flower buds.</text>
</comment>
<comment type="similarity">
    <text evidence="4">Belongs to the protein kinase superfamily. Ser/Thr protein kinase family.</text>
</comment>
<comment type="sequence caution" evidence="8">
    <conflict type="erroneous gene model prediction">
        <sequence resource="EMBL-CDS" id="AAF17672"/>
    </conflict>
</comment>
<evidence type="ECO:0000250" key="1"/>
<evidence type="ECO:0000250" key="2">
    <source>
        <dbReference type="UniProtKB" id="O48814"/>
    </source>
</evidence>
<evidence type="ECO:0000255" key="3"/>
<evidence type="ECO:0000255" key="4">
    <source>
        <dbReference type="PROSITE-ProRule" id="PRU00159"/>
    </source>
</evidence>
<evidence type="ECO:0000255" key="5">
    <source>
        <dbReference type="PROSITE-ProRule" id="PRU10027"/>
    </source>
</evidence>
<evidence type="ECO:0000256" key="6">
    <source>
        <dbReference type="SAM" id="MobiDB-lite"/>
    </source>
</evidence>
<evidence type="ECO:0000269" key="7">
    <source>
    </source>
</evidence>
<evidence type="ECO:0000305" key="8"/>
<reference key="1">
    <citation type="journal article" date="2000" name="Nature">
        <title>Sequence and analysis of chromosome 1 of the plant Arabidopsis thaliana.</title>
        <authorList>
            <person name="Theologis A."/>
            <person name="Ecker J.R."/>
            <person name="Palm C.J."/>
            <person name="Federspiel N.A."/>
            <person name="Kaul S."/>
            <person name="White O."/>
            <person name="Alonso J."/>
            <person name="Altafi H."/>
            <person name="Araujo R."/>
            <person name="Bowman C.L."/>
            <person name="Brooks S.Y."/>
            <person name="Buehler E."/>
            <person name="Chan A."/>
            <person name="Chao Q."/>
            <person name="Chen H."/>
            <person name="Cheuk R.F."/>
            <person name="Chin C.W."/>
            <person name="Chung M.K."/>
            <person name="Conn L."/>
            <person name="Conway A.B."/>
            <person name="Conway A.R."/>
            <person name="Creasy T.H."/>
            <person name="Dewar K."/>
            <person name="Dunn P."/>
            <person name="Etgu P."/>
            <person name="Feldblyum T.V."/>
            <person name="Feng J.-D."/>
            <person name="Fong B."/>
            <person name="Fujii C.Y."/>
            <person name="Gill J.E."/>
            <person name="Goldsmith A.D."/>
            <person name="Haas B."/>
            <person name="Hansen N.F."/>
            <person name="Hughes B."/>
            <person name="Huizar L."/>
            <person name="Hunter J.L."/>
            <person name="Jenkins J."/>
            <person name="Johnson-Hopson C."/>
            <person name="Khan S."/>
            <person name="Khaykin E."/>
            <person name="Kim C.J."/>
            <person name="Koo H.L."/>
            <person name="Kremenetskaia I."/>
            <person name="Kurtz D.B."/>
            <person name="Kwan A."/>
            <person name="Lam B."/>
            <person name="Langin-Hooper S."/>
            <person name="Lee A."/>
            <person name="Lee J.M."/>
            <person name="Lenz C.A."/>
            <person name="Li J.H."/>
            <person name="Li Y.-P."/>
            <person name="Lin X."/>
            <person name="Liu S.X."/>
            <person name="Liu Z.A."/>
            <person name="Luros J.S."/>
            <person name="Maiti R."/>
            <person name="Marziali A."/>
            <person name="Militscher J."/>
            <person name="Miranda M."/>
            <person name="Nguyen M."/>
            <person name="Nierman W.C."/>
            <person name="Osborne B.I."/>
            <person name="Pai G."/>
            <person name="Peterson J."/>
            <person name="Pham P.K."/>
            <person name="Rizzo M."/>
            <person name="Rooney T."/>
            <person name="Rowley D."/>
            <person name="Sakano H."/>
            <person name="Salzberg S.L."/>
            <person name="Schwartz J.R."/>
            <person name="Shinn P."/>
            <person name="Southwick A.M."/>
            <person name="Sun H."/>
            <person name="Tallon L.J."/>
            <person name="Tambunga G."/>
            <person name="Toriumi M.J."/>
            <person name="Town C.D."/>
            <person name="Utterback T."/>
            <person name="Van Aken S."/>
            <person name="Vaysberg M."/>
            <person name="Vysotskaia V.S."/>
            <person name="Walker M."/>
            <person name="Wu D."/>
            <person name="Yu G."/>
            <person name="Fraser C.M."/>
            <person name="Venter J.C."/>
            <person name="Davis R.W."/>
        </authorList>
    </citation>
    <scope>NUCLEOTIDE SEQUENCE [LARGE SCALE GENOMIC DNA]</scope>
    <source>
        <strain>cv. Columbia</strain>
    </source>
</reference>
<reference key="2">
    <citation type="journal article" date="2017" name="Plant J.">
        <title>Araport11: a complete reannotation of the Arabidopsis thaliana reference genome.</title>
        <authorList>
            <person name="Cheng C.Y."/>
            <person name="Krishnakumar V."/>
            <person name="Chan A.P."/>
            <person name="Thibaud-Nissen F."/>
            <person name="Schobel S."/>
            <person name="Town C.D."/>
        </authorList>
    </citation>
    <scope>GENOME REANNOTATION</scope>
    <source>
        <strain>cv. Columbia</strain>
    </source>
</reference>
<reference key="3">
    <citation type="journal article" date="2002" name="Plant Mol. Biol.">
        <title>The proline-rich, extensin-like receptor kinase-1 (PERK1) gene is rapidly induced by wounding.</title>
        <authorList>
            <person name="Silva N.F."/>
            <person name="Goring D.R."/>
        </authorList>
    </citation>
    <scope>GENE FAMILY</scope>
</reference>
<reference key="4">
    <citation type="journal article" date="2004" name="Plant Cell Physiol.">
        <title>A comprehensive expression analysis of the Arabidopsis proline-rich extensin-like receptor kinase gene family using bioinformatic and experimental approaches.</title>
        <authorList>
            <person name="Nakhamchik A."/>
            <person name="Zhao Z."/>
            <person name="Provart N.J."/>
            <person name="Shiu S.-H."/>
            <person name="Keatley S.K."/>
            <person name="Cameron R.K."/>
            <person name="Goring D.R."/>
        </authorList>
    </citation>
    <scope>TISSUE SPECIFICITY</scope>
    <scope>GENE FAMILY</scope>
    <scope>NOMENCLATURE</scope>
</reference>
<keyword id="KW-0067">ATP-binding</keyword>
<keyword id="KW-1003">Cell membrane</keyword>
<keyword id="KW-0325">Glycoprotein</keyword>
<keyword id="KW-0418">Kinase</keyword>
<keyword id="KW-0472">Membrane</keyword>
<keyword id="KW-0547">Nucleotide-binding</keyword>
<keyword id="KW-0597">Phosphoprotein</keyword>
<keyword id="KW-1185">Reference proteome</keyword>
<keyword id="KW-0723">Serine/threonine-protein kinase</keyword>
<keyword id="KW-0808">Transferase</keyword>
<keyword id="KW-0812">Transmembrane</keyword>
<keyword id="KW-1133">Transmembrane helix</keyword>
<dbReference type="EC" id="2.7.11.1"/>
<dbReference type="EMBL" id="AC009398">
    <property type="protein sequence ID" value="AAF17672.1"/>
    <property type="status" value="ALT_SEQ"/>
    <property type="molecule type" value="Genomic_DNA"/>
</dbReference>
<dbReference type="EMBL" id="CP002684">
    <property type="protein sequence ID" value="AEE28610.1"/>
    <property type="molecule type" value="Genomic_DNA"/>
</dbReference>
<dbReference type="PIR" id="G86239">
    <property type="entry name" value="G86239"/>
</dbReference>
<dbReference type="RefSeq" id="NP_172532.1">
    <property type="nucleotide sequence ID" value="NM_100938.2"/>
</dbReference>
<dbReference type="SMR" id="Q9SGY7"/>
<dbReference type="FunCoup" id="Q9SGY7">
    <property type="interactions" value="15"/>
</dbReference>
<dbReference type="STRING" id="3702.Q9SGY7"/>
<dbReference type="GlyCosmos" id="Q9SGY7">
    <property type="glycosylation" value="3 sites, No reported glycans"/>
</dbReference>
<dbReference type="GlyGen" id="Q9SGY7">
    <property type="glycosylation" value="4 sites"/>
</dbReference>
<dbReference type="PaxDb" id="3702-AT1G10620.1"/>
<dbReference type="ProteomicsDB" id="236447"/>
<dbReference type="EnsemblPlants" id="AT1G10620.1">
    <property type="protein sequence ID" value="AT1G10620.1"/>
    <property type="gene ID" value="AT1G10620"/>
</dbReference>
<dbReference type="GeneID" id="837605"/>
<dbReference type="Gramene" id="AT1G10620.1">
    <property type="protein sequence ID" value="AT1G10620.1"/>
    <property type="gene ID" value="AT1G10620"/>
</dbReference>
<dbReference type="KEGG" id="ath:AT1G10620"/>
<dbReference type="Araport" id="AT1G10620"/>
<dbReference type="TAIR" id="AT1G10620">
    <property type="gene designation" value="PERK11"/>
</dbReference>
<dbReference type="eggNOG" id="KOG1187">
    <property type="taxonomic scope" value="Eukaryota"/>
</dbReference>
<dbReference type="HOGENOM" id="CLU_000288_106_3_1"/>
<dbReference type="InParanoid" id="Q9SGY7"/>
<dbReference type="OMA" id="NESNYTE"/>
<dbReference type="PhylomeDB" id="Q9SGY7"/>
<dbReference type="PRO" id="PR:Q9SGY7"/>
<dbReference type="Proteomes" id="UP000006548">
    <property type="component" value="Chromosome 1"/>
</dbReference>
<dbReference type="ExpressionAtlas" id="Q9SGY7">
    <property type="expression patterns" value="baseline and differential"/>
</dbReference>
<dbReference type="GO" id="GO:0005886">
    <property type="term" value="C:plasma membrane"/>
    <property type="evidence" value="ECO:0007669"/>
    <property type="project" value="UniProtKB-SubCell"/>
</dbReference>
<dbReference type="GO" id="GO:0005524">
    <property type="term" value="F:ATP binding"/>
    <property type="evidence" value="ECO:0007669"/>
    <property type="project" value="UniProtKB-KW"/>
</dbReference>
<dbReference type="GO" id="GO:0106310">
    <property type="term" value="F:protein serine kinase activity"/>
    <property type="evidence" value="ECO:0007669"/>
    <property type="project" value="RHEA"/>
</dbReference>
<dbReference type="GO" id="GO:0004674">
    <property type="term" value="F:protein serine/threonine kinase activity"/>
    <property type="evidence" value="ECO:0007669"/>
    <property type="project" value="UniProtKB-KW"/>
</dbReference>
<dbReference type="CDD" id="cd14066">
    <property type="entry name" value="STKc_IRAK"/>
    <property type="match status" value="1"/>
</dbReference>
<dbReference type="FunFam" id="3.30.200.20:FF:000395">
    <property type="entry name" value="Proline-rich receptor-like protein kinase PERK3"/>
    <property type="match status" value="1"/>
</dbReference>
<dbReference type="FunFam" id="1.10.510.10:FF:000173">
    <property type="entry name" value="proline-rich receptor-like protein kinase PERK8"/>
    <property type="match status" value="1"/>
</dbReference>
<dbReference type="Gene3D" id="3.30.200.20">
    <property type="entry name" value="Phosphorylase Kinase, domain 1"/>
    <property type="match status" value="1"/>
</dbReference>
<dbReference type="Gene3D" id="1.10.510.10">
    <property type="entry name" value="Transferase(Phosphotransferase) domain 1"/>
    <property type="match status" value="1"/>
</dbReference>
<dbReference type="InterPro" id="IPR011009">
    <property type="entry name" value="Kinase-like_dom_sf"/>
</dbReference>
<dbReference type="InterPro" id="IPR047117">
    <property type="entry name" value="PERK1-13-like"/>
</dbReference>
<dbReference type="InterPro" id="IPR000719">
    <property type="entry name" value="Prot_kinase_dom"/>
</dbReference>
<dbReference type="InterPro" id="IPR017441">
    <property type="entry name" value="Protein_kinase_ATP_BS"/>
</dbReference>
<dbReference type="InterPro" id="IPR001245">
    <property type="entry name" value="Ser-Thr/Tyr_kinase_cat_dom"/>
</dbReference>
<dbReference type="InterPro" id="IPR008271">
    <property type="entry name" value="Ser/Thr_kinase_AS"/>
</dbReference>
<dbReference type="PANTHER" id="PTHR47982:SF28">
    <property type="entry name" value="PROLINE-RICH RECEPTOR-LIKE PROTEIN KINASE PERK11-RELATED"/>
    <property type="match status" value="1"/>
</dbReference>
<dbReference type="PANTHER" id="PTHR47982">
    <property type="entry name" value="PROLINE-RICH RECEPTOR-LIKE PROTEIN KINASE PERK4"/>
    <property type="match status" value="1"/>
</dbReference>
<dbReference type="Pfam" id="PF07714">
    <property type="entry name" value="PK_Tyr_Ser-Thr"/>
    <property type="match status" value="1"/>
</dbReference>
<dbReference type="SMART" id="SM00220">
    <property type="entry name" value="S_TKc"/>
    <property type="match status" value="1"/>
</dbReference>
<dbReference type="SUPFAM" id="SSF56112">
    <property type="entry name" value="Protein kinase-like (PK-like)"/>
    <property type="match status" value="1"/>
</dbReference>
<dbReference type="PROSITE" id="PS00107">
    <property type="entry name" value="PROTEIN_KINASE_ATP"/>
    <property type="match status" value="1"/>
</dbReference>
<dbReference type="PROSITE" id="PS50011">
    <property type="entry name" value="PROTEIN_KINASE_DOM"/>
    <property type="match status" value="1"/>
</dbReference>
<dbReference type="PROSITE" id="PS00108">
    <property type="entry name" value="PROTEIN_KINASE_ST"/>
    <property type="match status" value="1"/>
</dbReference>
<proteinExistence type="evidence at transcript level"/>
<name>PEK11_ARATH</name>
<protein>
    <recommendedName>
        <fullName>Putative proline-rich receptor-like protein kinase PERK11</fullName>
        <ecNumber>2.7.11.1</ecNumber>
    </recommendedName>
    <alternativeName>
        <fullName>Proline-rich extensin-like receptor kinase 11</fullName>
        <shortName>AtPERK11</shortName>
    </alternativeName>
</protein>
<feature type="chain" id="PRO_0000400063" description="Putative proline-rich receptor-like protein kinase PERK11">
    <location>
        <begin position="1"/>
        <end position="718"/>
    </location>
</feature>
<feature type="topological domain" description="Extracellular" evidence="3">
    <location>
        <begin position="1"/>
        <end position="262"/>
    </location>
</feature>
<feature type="transmembrane region" description="Helical" evidence="3">
    <location>
        <begin position="263"/>
        <end position="283"/>
    </location>
</feature>
<feature type="topological domain" description="Cytoplasmic" evidence="3">
    <location>
        <begin position="284"/>
        <end position="718"/>
    </location>
</feature>
<feature type="domain" description="Protein kinase" evidence="4">
    <location>
        <begin position="370"/>
        <end position="649"/>
    </location>
</feature>
<feature type="region of interest" description="Disordered" evidence="6">
    <location>
        <begin position="1"/>
        <end position="256"/>
    </location>
</feature>
<feature type="region of interest" description="Disordered" evidence="6">
    <location>
        <begin position="314"/>
        <end position="348"/>
    </location>
</feature>
<feature type="region of interest" description="Disordered" evidence="6">
    <location>
        <begin position="683"/>
        <end position="718"/>
    </location>
</feature>
<feature type="compositionally biased region" description="Pro residues" evidence="6">
    <location>
        <begin position="45"/>
        <end position="105"/>
    </location>
</feature>
<feature type="compositionally biased region" description="Pro residues" evidence="6">
    <location>
        <begin position="115"/>
        <end position="132"/>
    </location>
</feature>
<feature type="compositionally biased region" description="Pro residues" evidence="6">
    <location>
        <begin position="157"/>
        <end position="167"/>
    </location>
</feature>
<feature type="compositionally biased region" description="Low complexity" evidence="6">
    <location>
        <begin position="168"/>
        <end position="203"/>
    </location>
</feature>
<feature type="compositionally biased region" description="Low complexity" evidence="6">
    <location>
        <begin position="211"/>
        <end position="244"/>
    </location>
</feature>
<feature type="compositionally biased region" description="Polar residues" evidence="6">
    <location>
        <begin position="320"/>
        <end position="337"/>
    </location>
</feature>
<feature type="compositionally biased region" description="Polar residues" evidence="6">
    <location>
        <begin position="685"/>
        <end position="699"/>
    </location>
</feature>
<feature type="compositionally biased region" description="Polar residues" evidence="6">
    <location>
        <begin position="709"/>
        <end position="718"/>
    </location>
</feature>
<feature type="active site" description="Proton acceptor" evidence="4 5">
    <location>
        <position position="494"/>
    </location>
</feature>
<feature type="binding site" evidence="4">
    <location>
        <begin position="376"/>
        <end position="384"/>
    </location>
    <ligand>
        <name>ATP</name>
        <dbReference type="ChEBI" id="CHEBI:30616"/>
    </ligand>
</feature>
<feature type="binding site" evidence="4">
    <location>
        <position position="398"/>
    </location>
    <ligand>
        <name>ATP</name>
        <dbReference type="ChEBI" id="CHEBI:30616"/>
    </ligand>
</feature>
<feature type="modified residue" description="Phosphothreonine" evidence="2">
    <location>
        <position position="359"/>
    </location>
</feature>
<feature type="modified residue" description="Phosphotyrosine" evidence="2">
    <location>
        <position position="443"/>
    </location>
</feature>
<feature type="modified residue" description="Phosphoserine" evidence="2">
    <location>
        <position position="498"/>
    </location>
</feature>
<feature type="modified residue" description="Phosphoserine" evidence="2">
    <location>
        <position position="527"/>
    </location>
</feature>
<feature type="modified residue" description="Phosphothreonine" evidence="2">
    <location>
        <position position="528"/>
    </location>
</feature>
<feature type="modified residue" description="Phosphothreonine" evidence="2">
    <location>
        <position position="533"/>
    </location>
</feature>
<feature type="modified residue" description="Phosphotyrosine" evidence="2">
    <location>
        <position position="541"/>
    </location>
</feature>
<feature type="glycosylation site" description="N-linked (GlcNAc...) asparagine" evidence="3">
    <location>
        <position position="231"/>
    </location>
</feature>
<feature type="glycosylation site" description="N-linked (GlcNAc...) asparagine" evidence="3">
    <location>
        <position position="254"/>
    </location>
</feature>
<feature type="glycosylation site" description="N-linked (GlcNAc...) asparagine" evidence="3">
    <location>
        <position position="257"/>
    </location>
</feature>